<comment type="function">
    <text evidence="2">Translocates 4-amino-4-deoxy-L-arabinose-phosphoundecaprenol (alpha-L-Ara4N-phosphoundecaprenol) from the cytoplasmic to the periplasmic side of the inner membrane.</text>
</comment>
<comment type="pathway">
    <text evidence="2">Bacterial outer membrane biogenesis; lipopolysaccharide biosynthesis.</text>
</comment>
<comment type="subunit">
    <text evidence="2">Heterodimer of ArnE and ArnF.</text>
</comment>
<comment type="subcellular location">
    <subcellularLocation>
        <location evidence="2">Cell inner membrane</location>
        <topology evidence="2">Multi-pass membrane protein</topology>
    </subcellularLocation>
</comment>
<comment type="similarity">
    <text evidence="2">Belongs to the ArnE family.</text>
</comment>
<feature type="chain" id="PRO_0000382962" description="Probable 4-amino-4-deoxy-L-arabinose-phosphoundecaprenol flippase subunit ArnE">
    <location>
        <begin position="1"/>
        <end position="111"/>
    </location>
</feature>
<feature type="topological domain" description="Cytoplasmic" evidence="1">
    <location>
        <begin position="1"/>
        <end position="35"/>
    </location>
</feature>
<feature type="transmembrane region" description="Helical" evidence="2">
    <location>
        <begin position="36"/>
        <end position="56"/>
    </location>
</feature>
<feature type="topological domain" description="Periplasmic" evidence="1">
    <location>
        <begin position="57"/>
        <end position="60"/>
    </location>
</feature>
<feature type="transmembrane region" description="Helical" evidence="2">
    <location>
        <begin position="61"/>
        <end position="81"/>
    </location>
</feature>
<feature type="topological domain" description="Cytoplasmic" evidence="1">
    <location>
        <begin position="82"/>
        <end position="87"/>
    </location>
</feature>
<feature type="transmembrane region" description="Helical" evidence="2">
    <location>
        <begin position="88"/>
        <end position="108"/>
    </location>
</feature>
<feature type="topological domain" description="Periplasmic" evidence="1">
    <location>
        <begin position="109"/>
        <end position="111"/>
    </location>
</feature>
<feature type="domain" description="EamA" evidence="2">
    <location>
        <begin position="40"/>
        <end position="109"/>
    </location>
</feature>
<evidence type="ECO:0000255" key="1"/>
<evidence type="ECO:0000255" key="2">
    <source>
        <dbReference type="HAMAP-Rule" id="MF_01869"/>
    </source>
</evidence>
<dbReference type="EMBL" id="FM180568">
    <property type="protein sequence ID" value="CAS09950.1"/>
    <property type="molecule type" value="Genomic_DNA"/>
</dbReference>
<dbReference type="RefSeq" id="WP_000638018.1">
    <property type="nucleotide sequence ID" value="NC_011601.1"/>
</dbReference>
<dbReference type="SMR" id="B7UFS0"/>
<dbReference type="KEGG" id="ecg:E2348C_2402"/>
<dbReference type="HOGENOM" id="CLU_131462_5_1_6"/>
<dbReference type="UniPathway" id="UPA00030"/>
<dbReference type="Proteomes" id="UP000008205">
    <property type="component" value="Chromosome"/>
</dbReference>
<dbReference type="GO" id="GO:0005886">
    <property type="term" value="C:plasma membrane"/>
    <property type="evidence" value="ECO:0007669"/>
    <property type="project" value="UniProtKB-SubCell"/>
</dbReference>
<dbReference type="GO" id="GO:1901505">
    <property type="term" value="F:carbohydrate derivative transmembrane transporter activity"/>
    <property type="evidence" value="ECO:0007669"/>
    <property type="project" value="InterPro"/>
</dbReference>
<dbReference type="GO" id="GO:0009245">
    <property type="term" value="P:lipid A biosynthetic process"/>
    <property type="evidence" value="ECO:0007669"/>
    <property type="project" value="UniProtKB-UniRule"/>
</dbReference>
<dbReference type="GO" id="GO:0009103">
    <property type="term" value="P:lipopolysaccharide biosynthetic process"/>
    <property type="evidence" value="ECO:0007669"/>
    <property type="project" value="UniProtKB-UniRule"/>
</dbReference>
<dbReference type="FunFam" id="1.10.3730.20:FF:000002">
    <property type="entry name" value="Probable 4-amino-4-deoxy-L-arabinose-phosphoundecaprenol flippase subunit ArnE"/>
    <property type="match status" value="1"/>
</dbReference>
<dbReference type="Gene3D" id="1.10.3730.20">
    <property type="match status" value="1"/>
</dbReference>
<dbReference type="HAMAP" id="MF_01869">
    <property type="entry name" value="Flippase_ArnE"/>
    <property type="match status" value="1"/>
</dbReference>
<dbReference type="InterPro" id="IPR000620">
    <property type="entry name" value="EamA_dom"/>
</dbReference>
<dbReference type="InterPro" id="IPR022883">
    <property type="entry name" value="Flippase_ArnE"/>
</dbReference>
<dbReference type="InterPro" id="IPR000390">
    <property type="entry name" value="Small_drug/metabolite_transptr"/>
</dbReference>
<dbReference type="NCBIfam" id="NF011625">
    <property type="entry name" value="PRK15051.1"/>
    <property type="match status" value="1"/>
</dbReference>
<dbReference type="PANTHER" id="PTHR30561:SF23">
    <property type="entry name" value="4-AMINO-4-DEOXY-L-ARABINOSE-PHOSPHOUNDECAPRENOL FLIPPASE SUBUNIT ARNE-RELATED"/>
    <property type="match status" value="1"/>
</dbReference>
<dbReference type="PANTHER" id="PTHR30561">
    <property type="entry name" value="SMR FAMILY PROTON-DEPENDENT DRUG EFFLUX TRANSPORTER SUGE"/>
    <property type="match status" value="1"/>
</dbReference>
<dbReference type="Pfam" id="PF00892">
    <property type="entry name" value="EamA"/>
    <property type="match status" value="1"/>
</dbReference>
<dbReference type="SUPFAM" id="SSF103481">
    <property type="entry name" value="Multidrug resistance efflux transporter EmrE"/>
    <property type="match status" value="1"/>
</dbReference>
<protein>
    <recommendedName>
        <fullName evidence="2">Probable 4-amino-4-deoxy-L-arabinose-phosphoundecaprenol flippase subunit ArnE</fullName>
        <shortName evidence="2">L-Ara4N-phosphoundecaprenol flippase subunit ArnE</shortName>
    </recommendedName>
    <alternativeName>
        <fullName evidence="2">Undecaprenyl phosphate-aminoarabinose flippase subunit ArnE</fullName>
    </alternativeName>
</protein>
<accession>B7UFS0</accession>
<organism>
    <name type="scientific">Escherichia coli O127:H6 (strain E2348/69 / EPEC)</name>
    <dbReference type="NCBI Taxonomy" id="574521"/>
    <lineage>
        <taxon>Bacteria</taxon>
        <taxon>Pseudomonadati</taxon>
        <taxon>Pseudomonadota</taxon>
        <taxon>Gammaproteobacteria</taxon>
        <taxon>Enterobacterales</taxon>
        <taxon>Enterobacteriaceae</taxon>
        <taxon>Escherichia</taxon>
    </lineage>
</organism>
<reference key="1">
    <citation type="journal article" date="2009" name="J. Bacteriol.">
        <title>Complete genome sequence and comparative genome analysis of enteropathogenic Escherichia coli O127:H6 strain E2348/69.</title>
        <authorList>
            <person name="Iguchi A."/>
            <person name="Thomson N.R."/>
            <person name="Ogura Y."/>
            <person name="Saunders D."/>
            <person name="Ooka T."/>
            <person name="Henderson I.R."/>
            <person name="Harris D."/>
            <person name="Asadulghani M."/>
            <person name="Kurokawa K."/>
            <person name="Dean P."/>
            <person name="Kenny B."/>
            <person name="Quail M.A."/>
            <person name="Thurston S."/>
            <person name="Dougan G."/>
            <person name="Hayashi T."/>
            <person name="Parkhill J."/>
            <person name="Frankel G."/>
        </authorList>
    </citation>
    <scope>NUCLEOTIDE SEQUENCE [LARGE SCALE GENOMIC DNA]</scope>
    <source>
        <strain>E2348/69 / EPEC</strain>
    </source>
</reference>
<keyword id="KW-0997">Cell inner membrane</keyword>
<keyword id="KW-1003">Cell membrane</keyword>
<keyword id="KW-0441">Lipid A biosynthesis</keyword>
<keyword id="KW-0444">Lipid biosynthesis</keyword>
<keyword id="KW-0443">Lipid metabolism</keyword>
<keyword id="KW-0448">Lipopolysaccharide biosynthesis</keyword>
<keyword id="KW-0472">Membrane</keyword>
<keyword id="KW-1185">Reference proteome</keyword>
<keyword id="KW-0812">Transmembrane</keyword>
<keyword id="KW-1133">Transmembrane helix</keyword>
<keyword id="KW-0813">Transport</keyword>
<proteinExistence type="inferred from homology"/>
<name>ARNE_ECO27</name>
<gene>
    <name evidence="2" type="primary">arnE</name>
    <name type="ordered locus">E2348C_2402</name>
</gene>
<sequence>MIWLTLVFASLLSVAGQLCQKQATCFATVNKRRKHIVLWLGLALACLGLAMVLWLLVLQNVPVGIAYPMLSLNFVWVTLAAVKLWHEPVSLRHWCGVAFIIGGIVILGSTV</sequence>